<dbReference type="EMBL" id="Z19545">
    <property type="protein sequence ID" value="CAA79605.1"/>
    <property type="molecule type" value="mRNA"/>
</dbReference>
<dbReference type="EMBL" id="X52975">
    <property type="protein sequence ID" value="CAA37167.1"/>
    <property type="molecule type" value="mRNA"/>
</dbReference>
<dbReference type="PIR" id="S10224">
    <property type="entry name" value="S10224"/>
</dbReference>
<dbReference type="RefSeq" id="NP_001095231.1">
    <property type="nucleotide sequence ID" value="NM_001101761.1"/>
</dbReference>
<dbReference type="SMR" id="P17506"/>
<dbReference type="IntAct" id="P17506">
    <property type="interactions" value="3"/>
</dbReference>
<dbReference type="MINT" id="P17506"/>
<dbReference type="MoonProt" id="P17506"/>
<dbReference type="GeneID" id="397889"/>
<dbReference type="KEGG" id="xla:397889"/>
<dbReference type="AGR" id="Xenbase:XB-GENE-5853356"/>
<dbReference type="CTD" id="397889"/>
<dbReference type="Xenbase" id="XB-GENE-5853356">
    <property type="gene designation" value="42sp50.L"/>
</dbReference>
<dbReference type="OMA" id="AHVTCRF"/>
<dbReference type="OrthoDB" id="342024at2759"/>
<dbReference type="Proteomes" id="UP000186698">
    <property type="component" value="Chromosome 6L"/>
</dbReference>
<dbReference type="Bgee" id="397889">
    <property type="expression patterns" value="Expressed in ovary and 15 other cell types or tissues"/>
</dbReference>
<dbReference type="GO" id="GO:0005829">
    <property type="term" value="C:cytosol"/>
    <property type="evidence" value="ECO:0000314"/>
    <property type="project" value="CAFA"/>
</dbReference>
<dbReference type="GO" id="GO:0005525">
    <property type="term" value="F:GTP binding"/>
    <property type="evidence" value="ECO:0007669"/>
    <property type="project" value="UniProtKB-KW"/>
</dbReference>
<dbReference type="GO" id="GO:0003924">
    <property type="term" value="F:GTPase activity"/>
    <property type="evidence" value="ECO:0000318"/>
    <property type="project" value="GO_Central"/>
</dbReference>
<dbReference type="GO" id="GO:0003746">
    <property type="term" value="F:translation elongation factor activity"/>
    <property type="evidence" value="ECO:0000318"/>
    <property type="project" value="GO_Central"/>
</dbReference>
<dbReference type="GO" id="GO:0006412">
    <property type="term" value="P:translation"/>
    <property type="evidence" value="ECO:0000318"/>
    <property type="project" value="GO_Central"/>
</dbReference>
<dbReference type="GO" id="GO:0006414">
    <property type="term" value="P:translational elongation"/>
    <property type="evidence" value="ECO:0000318"/>
    <property type="project" value="GO_Central"/>
</dbReference>
<dbReference type="CDD" id="cd01883">
    <property type="entry name" value="EF1_alpha"/>
    <property type="match status" value="1"/>
</dbReference>
<dbReference type="CDD" id="cd03693">
    <property type="entry name" value="EF1_alpha_II"/>
    <property type="match status" value="1"/>
</dbReference>
<dbReference type="CDD" id="cd03705">
    <property type="entry name" value="EF1_alpha_III"/>
    <property type="match status" value="1"/>
</dbReference>
<dbReference type="FunFam" id="2.40.30.10:FF:000003">
    <property type="entry name" value="Elongation factor 1-alpha"/>
    <property type="match status" value="1"/>
</dbReference>
<dbReference type="FunFam" id="2.40.30.10:FF:000005">
    <property type="entry name" value="Elongation factor 1-alpha"/>
    <property type="match status" value="1"/>
</dbReference>
<dbReference type="FunFam" id="3.40.50.300:FF:000090">
    <property type="entry name" value="Elongation factor 1-alpha"/>
    <property type="match status" value="1"/>
</dbReference>
<dbReference type="Gene3D" id="3.40.50.300">
    <property type="entry name" value="P-loop containing nucleotide triphosphate hydrolases"/>
    <property type="match status" value="1"/>
</dbReference>
<dbReference type="Gene3D" id="2.40.30.10">
    <property type="entry name" value="Translation factors"/>
    <property type="match status" value="2"/>
</dbReference>
<dbReference type="InterPro" id="IPR004161">
    <property type="entry name" value="EFTu-like_2"/>
</dbReference>
<dbReference type="InterPro" id="IPR031157">
    <property type="entry name" value="G_TR_CS"/>
</dbReference>
<dbReference type="InterPro" id="IPR054696">
    <property type="entry name" value="GTP-eEF1A_C"/>
</dbReference>
<dbReference type="InterPro" id="IPR027417">
    <property type="entry name" value="P-loop_NTPase"/>
</dbReference>
<dbReference type="InterPro" id="IPR000795">
    <property type="entry name" value="T_Tr_GTP-bd_dom"/>
</dbReference>
<dbReference type="InterPro" id="IPR050100">
    <property type="entry name" value="TRAFAC_GTPase_members"/>
</dbReference>
<dbReference type="InterPro" id="IPR009000">
    <property type="entry name" value="Transl_B-barrel_sf"/>
</dbReference>
<dbReference type="InterPro" id="IPR009001">
    <property type="entry name" value="Transl_elong_EF1A/Init_IF2_C"/>
</dbReference>
<dbReference type="InterPro" id="IPR004539">
    <property type="entry name" value="Transl_elong_EF1A_euk/arc"/>
</dbReference>
<dbReference type="NCBIfam" id="TIGR00483">
    <property type="entry name" value="EF-1_alpha"/>
    <property type="match status" value="1"/>
</dbReference>
<dbReference type="NCBIfam" id="NF008969">
    <property type="entry name" value="PRK12317.1"/>
    <property type="match status" value="1"/>
</dbReference>
<dbReference type="PANTHER" id="PTHR23115">
    <property type="entry name" value="TRANSLATION FACTOR"/>
    <property type="match status" value="1"/>
</dbReference>
<dbReference type="Pfam" id="PF22594">
    <property type="entry name" value="GTP-eEF1A_C"/>
    <property type="match status" value="1"/>
</dbReference>
<dbReference type="Pfam" id="PF00009">
    <property type="entry name" value="GTP_EFTU"/>
    <property type="match status" value="1"/>
</dbReference>
<dbReference type="Pfam" id="PF03144">
    <property type="entry name" value="GTP_EFTU_D2"/>
    <property type="match status" value="1"/>
</dbReference>
<dbReference type="PRINTS" id="PR00315">
    <property type="entry name" value="ELONGATNFCT"/>
</dbReference>
<dbReference type="SUPFAM" id="SSF50465">
    <property type="entry name" value="EF-Tu/eEF-1alpha/eIF2-gamma C-terminal domain"/>
    <property type="match status" value="1"/>
</dbReference>
<dbReference type="SUPFAM" id="SSF52540">
    <property type="entry name" value="P-loop containing nucleoside triphosphate hydrolases"/>
    <property type="match status" value="1"/>
</dbReference>
<dbReference type="SUPFAM" id="SSF50447">
    <property type="entry name" value="Translation proteins"/>
    <property type="match status" value="1"/>
</dbReference>
<dbReference type="PROSITE" id="PS00301">
    <property type="entry name" value="G_TR_1"/>
    <property type="match status" value="1"/>
</dbReference>
<dbReference type="PROSITE" id="PS51722">
    <property type="entry name" value="G_TR_2"/>
    <property type="match status" value="1"/>
</dbReference>
<proteinExistence type="evidence at protein level"/>
<evidence type="ECO:0000250" key="1"/>
<evidence type="ECO:0000255" key="2">
    <source>
        <dbReference type="PROSITE-ProRule" id="PRU01059"/>
    </source>
</evidence>
<evidence type="ECO:0000269" key="3">
    <source>
    </source>
</evidence>
<evidence type="ECO:0000305" key="4"/>
<comment type="function">
    <text evidence="3">This protein is one of two protein components of a 42S RNP particle that is very abundant in previtellogenic oocytes. A major function served by 42sp50 appears to be the storage of tRNAs for later use in oogenesis and early embryogenesis. Purified 42S particles can directly transfer aminoacyl tRNA to ribosomes.</text>
</comment>
<comment type="subunit">
    <text>The 42S RNP particle comprises four subunits each of which contains one molecule of 5S RNA, three molecules of tRNA, two molecules of EF1-alpha and one molecule of the 5S RNA binding protein 43.</text>
</comment>
<comment type="interaction">
    <interactant intactId="EBI-8486828">
        <id>P17506</id>
    </interactant>
    <interactant intactId="EBI-619004">
        <id>O73932</id>
        <label>igf2bp3-a</label>
    </interactant>
    <organismsDiffer>false</organismsDiffer>
    <experiments>4</experiments>
</comment>
<comment type="subcellular location">
    <subcellularLocation>
        <location>Cytoplasm</location>
    </subcellularLocation>
</comment>
<comment type="developmental stage">
    <text>3 EF-1-alpha are expressed under different developmental control in Xenopus laevis. This protein is expressed exclusively in immature oocytes.</text>
</comment>
<comment type="similarity">
    <text evidence="2">Belongs to the TRAFAC class translation factor GTPase superfamily. Classic translation factor GTPase family. EF-Tu/EF-1A subfamily.</text>
</comment>
<protein>
    <recommendedName>
        <fullName>Elongation factor 1-alpha</fullName>
        <shortName>EF-1-alpha</shortName>
    </recommendedName>
    <alternativeName>
        <fullName>42Sp50</fullName>
    </alternativeName>
    <alternativeName>
        <fullName>Thesaurin A</fullName>
    </alternativeName>
</protein>
<sequence>MTDKAPQKTHLNIVIIGHVDSGKSTTTGHLIYKCGGFDPRALEKVEAAAAQLGKSSFKFAWILDKLKAERERGITIDISLWKFQTNRFTITIIDAPGHRDFIKNMITGTSQADVALLVVSAATGEFEAGVSRNGQTREHALLAYTMGVKQLIVCVNKMDLTDPPYSHKRFDEVVRNVMVYLKKIGYNPATIPFVPVSGWTGENISSPSQKMGWFKGWKVKRKDGFTKGQSLLEVLDALVPPVRPANKPLRLPLQDVYKIGGIGTVPVGKIETGILKPGMTISFAPSGFSAEVKSIEMHHEPLQMAFPGFNIGFNVKNIAVKSLKRGNVAGNSKSDPPTEASSFTAQVIILNHPGFIKAGYSPVIDCHTAHITCQFAELQEKIDRRTGKKLEDNPGLLKSGDAAIITLKPIKPFCVERFFDYPPLGRFAARDLKQTVAVGVVKSVEHKAGAAARRQVQKPVLVK</sequence>
<accession>P17506</accession>
<keyword id="KW-0963">Cytoplasm</keyword>
<keyword id="KW-0903">Direct protein sequencing</keyword>
<keyword id="KW-0251">Elongation factor</keyword>
<keyword id="KW-0342">GTP-binding</keyword>
<keyword id="KW-0547">Nucleotide-binding</keyword>
<keyword id="KW-0648">Protein biosynthesis</keyword>
<keyword id="KW-1185">Reference proteome</keyword>
<organism>
    <name type="scientific">Xenopus laevis</name>
    <name type="common">African clawed frog</name>
    <dbReference type="NCBI Taxonomy" id="8355"/>
    <lineage>
        <taxon>Eukaryota</taxon>
        <taxon>Metazoa</taxon>
        <taxon>Chordata</taxon>
        <taxon>Craniata</taxon>
        <taxon>Vertebrata</taxon>
        <taxon>Euteleostomi</taxon>
        <taxon>Amphibia</taxon>
        <taxon>Batrachia</taxon>
        <taxon>Anura</taxon>
        <taxon>Pipoidea</taxon>
        <taxon>Pipidae</taxon>
        <taxon>Xenopodinae</taxon>
        <taxon>Xenopus</taxon>
        <taxon>Xenopus</taxon>
    </lineage>
</organism>
<feature type="chain" id="PRO_0000090899" description="Elongation factor 1-alpha">
    <location>
        <begin position="1"/>
        <end position="463"/>
    </location>
</feature>
<feature type="domain" description="tr-type G" evidence="2">
    <location>
        <begin position="8"/>
        <end position="245"/>
    </location>
</feature>
<feature type="region of interest" description="G1" evidence="2">
    <location>
        <begin position="17"/>
        <end position="24"/>
    </location>
</feature>
<feature type="region of interest" description="G2" evidence="2">
    <location>
        <begin position="73"/>
        <end position="77"/>
    </location>
</feature>
<feature type="region of interest" description="G3" evidence="2">
    <location>
        <begin position="94"/>
        <end position="97"/>
    </location>
</feature>
<feature type="region of interest" description="G4" evidence="2">
    <location>
        <begin position="156"/>
        <end position="159"/>
    </location>
</feature>
<feature type="region of interest" description="G5" evidence="2">
    <location>
        <begin position="197"/>
        <end position="199"/>
    </location>
</feature>
<feature type="binding site" evidence="1">
    <location>
        <begin position="17"/>
        <end position="24"/>
    </location>
    <ligand>
        <name>GTP</name>
        <dbReference type="ChEBI" id="CHEBI:37565"/>
    </ligand>
</feature>
<feature type="binding site" evidence="1">
    <location>
        <begin position="94"/>
        <end position="98"/>
    </location>
    <ligand>
        <name>GTP</name>
        <dbReference type="ChEBI" id="CHEBI:37565"/>
    </ligand>
</feature>
<feature type="binding site" evidence="1">
    <location>
        <begin position="156"/>
        <end position="159"/>
    </location>
    <ligand>
        <name>GTP</name>
        <dbReference type="ChEBI" id="CHEBI:37565"/>
    </ligand>
</feature>
<feature type="sequence conflict" description="In Ref. 2; CAA37167." evidence="4" ref="2">
    <original>LQD</original>
    <variation>PAY</variation>
    <location>
        <begin position="253"/>
        <end position="255"/>
    </location>
</feature>
<feature type="sequence conflict" description="In Ref. 2; CAA37167." evidence="4" ref="2">
    <original>V</original>
    <variation>A</variation>
    <location>
        <position position="320"/>
    </location>
</feature>
<reference key="1">
    <citation type="journal article" date="1993" name="Nucleic Acids Res.">
        <title>Correction of the nucleotide and amino acid sequence of Xenopus laevis 42Sp50.</title>
        <authorList>
            <person name="Cheng F.-M."/>
            <person name="Darby M.K."/>
            <person name="Joho K.E."/>
        </authorList>
    </citation>
    <scope>NUCLEOTIDE SEQUENCE [MRNA]</scope>
</reference>
<reference key="2">
    <citation type="journal article" date="1990" name="Nucleic Acids Res.">
        <title>Three genes under different developmental control encode elongation factor 1-alpha in Xenopus laevis.</title>
        <authorList>
            <person name="Dje M.K."/>
            <person name="Mazabraud A."/>
            <person name="Viel A."/>
            <person name="le Maire M."/>
            <person name="Denis H."/>
            <person name="Crawford E.T."/>
            <person name="Brown D.D."/>
        </authorList>
    </citation>
    <scope>NUCLEOTIDE SEQUENCE [MRNA]</scope>
    <source>
        <tissue>Oocyte</tissue>
    </source>
</reference>
<reference key="3">
    <citation type="journal article" date="1991" name="J. Cell Biol.">
        <title>Two forms of elongation factor 1 alpha (EF-1 alpha O and 42Sp50), present in oocytes, but absent in somatic cells of Xenopus laevis.</title>
        <authorList>
            <person name="Deschamps S."/>
            <person name="Morales J."/>
            <person name="Mazabraud A."/>
            <person name="le Maire M."/>
            <person name="Denis H."/>
            <person name="Brown D.D."/>
        </authorList>
    </citation>
    <scope>PARTIAL PROTEIN SEQUENCE</scope>
</reference>
<reference key="4">
    <citation type="journal article" date="1991" name="J. Biol. Chem.">
        <title>Structural and functional properties of thesaurin a (42Sp50), the major protein of the 42 S particles present in Xenopus laevis previtellogenic oocytes.</title>
        <authorList>
            <person name="Viel A."/>
            <person name="le Maire M."/>
            <person name="Philippe H."/>
            <person name="Morales J."/>
            <person name="Mazabraud A."/>
            <person name="Denis H."/>
        </authorList>
    </citation>
    <scope>FUNCTION</scope>
</reference>
<name>EF1A1_XENLA</name>